<comment type="function">
    <text evidence="1">Catalyzes the hydrolysis of short-chain aliphatic amides to their corresponding organic acids with release of ammonia.</text>
</comment>
<comment type="function">
    <text evidence="1">Also exhibits in vitro acyl transferase activity, transferring the acyl moiety of short-chain amides to hydroxylamine to form hydroxamates.</text>
</comment>
<comment type="catalytic activity">
    <reaction evidence="1">
        <text>a monocarboxylic acid amide + H2O = a monocarboxylate + NH4(+)</text>
        <dbReference type="Rhea" id="RHEA:12020"/>
        <dbReference type="ChEBI" id="CHEBI:15377"/>
        <dbReference type="ChEBI" id="CHEBI:28938"/>
        <dbReference type="ChEBI" id="CHEBI:35757"/>
        <dbReference type="ChEBI" id="CHEBI:83628"/>
        <dbReference type="EC" id="3.5.1.4"/>
    </reaction>
</comment>
<comment type="similarity">
    <text evidence="1">Belongs to the carbon-nitrogen hydrolase superfamily. Aliphatic amidase family.</text>
</comment>
<organism>
    <name type="scientific">Bradyrhizobium diazoefficiens (strain JCM 10833 / BCRC 13528 / IAM 13628 / NBRC 14792 / USDA 110)</name>
    <dbReference type="NCBI Taxonomy" id="224911"/>
    <lineage>
        <taxon>Bacteria</taxon>
        <taxon>Pseudomonadati</taxon>
        <taxon>Pseudomonadota</taxon>
        <taxon>Alphaproteobacteria</taxon>
        <taxon>Hyphomicrobiales</taxon>
        <taxon>Nitrobacteraceae</taxon>
        <taxon>Bradyrhizobium</taxon>
    </lineage>
</organism>
<proteinExistence type="inferred from homology"/>
<accession>Q89VS2</accession>
<protein>
    <recommendedName>
        <fullName evidence="1">Aliphatic amidase</fullName>
        <ecNumber evidence="1">3.5.1.4</ecNumber>
    </recommendedName>
    <alternativeName>
        <fullName evidence="1">Acylamide amidohydrolase</fullName>
    </alternativeName>
</protein>
<evidence type="ECO:0000255" key="1">
    <source>
        <dbReference type="HAMAP-Rule" id="MF_01242"/>
    </source>
</evidence>
<evidence type="ECO:0000255" key="2">
    <source>
        <dbReference type="PROSITE-ProRule" id="PRU00054"/>
    </source>
</evidence>
<gene>
    <name evidence="1" type="primary">amiE</name>
    <name type="ordered locus">blr0973</name>
</gene>
<keyword id="KW-0378">Hydrolase</keyword>
<keyword id="KW-1185">Reference proteome</keyword>
<dbReference type="EC" id="3.5.1.4" evidence="1"/>
<dbReference type="EMBL" id="BA000040">
    <property type="protein sequence ID" value="BAC46238.1"/>
    <property type="molecule type" value="Genomic_DNA"/>
</dbReference>
<dbReference type="RefSeq" id="NP_767613.1">
    <property type="nucleotide sequence ID" value="NC_004463.1"/>
</dbReference>
<dbReference type="RefSeq" id="WP_011083793.1">
    <property type="nucleotide sequence ID" value="NC_004463.1"/>
</dbReference>
<dbReference type="SMR" id="Q89VS2"/>
<dbReference type="STRING" id="224911.AAV28_01710"/>
<dbReference type="EnsemblBacteria" id="BAC46238">
    <property type="protein sequence ID" value="BAC46238"/>
    <property type="gene ID" value="BAC46238"/>
</dbReference>
<dbReference type="GeneID" id="46488243"/>
<dbReference type="KEGG" id="bja:blr0973"/>
<dbReference type="PATRIC" id="fig|224911.44.peg.362"/>
<dbReference type="eggNOG" id="COG0388">
    <property type="taxonomic scope" value="Bacteria"/>
</dbReference>
<dbReference type="HOGENOM" id="CLU_071797_0_0_5"/>
<dbReference type="InParanoid" id="Q89VS2"/>
<dbReference type="OrthoDB" id="9803803at2"/>
<dbReference type="PhylomeDB" id="Q89VS2"/>
<dbReference type="Proteomes" id="UP000002526">
    <property type="component" value="Chromosome"/>
</dbReference>
<dbReference type="GO" id="GO:0004040">
    <property type="term" value="F:amidase activity"/>
    <property type="evidence" value="ECO:0007669"/>
    <property type="project" value="UniProtKB-UniRule"/>
</dbReference>
<dbReference type="GO" id="GO:0016811">
    <property type="term" value="F:hydrolase activity, acting on carbon-nitrogen (but not peptide) bonds, in linear amides"/>
    <property type="evidence" value="ECO:0000318"/>
    <property type="project" value="GO_Central"/>
</dbReference>
<dbReference type="CDD" id="cd07565">
    <property type="entry name" value="aliphatic_amidase"/>
    <property type="match status" value="1"/>
</dbReference>
<dbReference type="Gene3D" id="3.60.110.10">
    <property type="entry name" value="Carbon-nitrogen hydrolase"/>
    <property type="match status" value="1"/>
</dbReference>
<dbReference type="HAMAP" id="MF_01242">
    <property type="entry name" value="Aliphatic_amidase"/>
    <property type="match status" value="1"/>
</dbReference>
<dbReference type="InterPro" id="IPR050345">
    <property type="entry name" value="Aliph_Amidase/BUP"/>
</dbReference>
<dbReference type="InterPro" id="IPR023719">
    <property type="entry name" value="Aliphatic_amidase"/>
</dbReference>
<dbReference type="InterPro" id="IPR003010">
    <property type="entry name" value="C-N_Hydrolase"/>
</dbReference>
<dbReference type="InterPro" id="IPR036526">
    <property type="entry name" value="C-N_Hydrolase_sf"/>
</dbReference>
<dbReference type="NCBIfam" id="NF009802">
    <property type="entry name" value="PRK13286.1"/>
    <property type="match status" value="1"/>
</dbReference>
<dbReference type="PANTHER" id="PTHR43674:SF14">
    <property type="entry name" value="ALIPHATIC AMIDASE"/>
    <property type="match status" value="1"/>
</dbReference>
<dbReference type="PANTHER" id="PTHR43674">
    <property type="entry name" value="NITRILASE C965.09-RELATED"/>
    <property type="match status" value="1"/>
</dbReference>
<dbReference type="Pfam" id="PF00795">
    <property type="entry name" value="CN_hydrolase"/>
    <property type="match status" value="1"/>
</dbReference>
<dbReference type="SUPFAM" id="SSF56317">
    <property type="entry name" value="Carbon-nitrogen hydrolase"/>
    <property type="match status" value="1"/>
</dbReference>
<dbReference type="PROSITE" id="PS50263">
    <property type="entry name" value="CN_HYDROLASE"/>
    <property type="match status" value="1"/>
</dbReference>
<feature type="chain" id="PRO_0000204057" description="Aliphatic amidase">
    <location>
        <begin position="1"/>
        <end position="346"/>
    </location>
</feature>
<feature type="domain" description="CN hydrolase" evidence="2">
    <location>
        <begin position="13"/>
        <end position="260"/>
    </location>
</feature>
<feature type="active site" description="Proton acceptor" evidence="1">
    <location>
        <position position="59"/>
    </location>
</feature>
<feature type="active site" description="Proton donor" evidence="1">
    <location>
        <position position="134"/>
    </location>
</feature>
<feature type="active site" description="Nucleophile" evidence="1">
    <location>
        <position position="166"/>
    </location>
</feature>
<sequence>MLHGDISSSNDTVGVAVVNYKMPRLHTKAEVLDNARKIADMVVGMKVGLPGMDLVIFPEYSTQGIMYDSKEMYETASAVPGEETAIFAEACRKAKVWGVFSLTGERHEEHPHKAPYNTLILMNDKGEIVQKYRKIMPWVPIEGWYPGNCTYVSEGPKGLKVSLIICDDGNYPEIWRDCAMKGAELIVRCQGYMYPAKEQQVLISKAMAWANNVYVAVANAAGFDGVYSYFGHSAIIGFDGRTLGECGEEDYGIQYAQLSKHLIRDARRNGQSQNHLYKLVHRGYTGMINSGESPRGVAACPYDFYKNWIKDPEGTRDMVEAMTRSTPGTDECPIEGIPNEAAASNY</sequence>
<name>AMIE_BRADU</name>
<reference key="1">
    <citation type="journal article" date="2002" name="DNA Res.">
        <title>Complete genomic sequence of nitrogen-fixing symbiotic bacterium Bradyrhizobium japonicum USDA110.</title>
        <authorList>
            <person name="Kaneko T."/>
            <person name="Nakamura Y."/>
            <person name="Sato S."/>
            <person name="Minamisawa K."/>
            <person name="Uchiumi T."/>
            <person name="Sasamoto S."/>
            <person name="Watanabe A."/>
            <person name="Idesawa K."/>
            <person name="Iriguchi M."/>
            <person name="Kawashima K."/>
            <person name="Kohara M."/>
            <person name="Matsumoto M."/>
            <person name="Shimpo S."/>
            <person name="Tsuruoka H."/>
            <person name="Wada T."/>
            <person name="Yamada M."/>
            <person name="Tabata S."/>
        </authorList>
    </citation>
    <scope>NUCLEOTIDE SEQUENCE [LARGE SCALE GENOMIC DNA]</scope>
    <source>
        <strain>JCM 10833 / BCRC 13528 / IAM 13628 / NBRC 14792 / USDA 110</strain>
    </source>
</reference>